<comment type="similarity">
    <text evidence="1">Belongs to the BtpA family.</text>
</comment>
<feature type="chain" id="PRO_0000159331" description="Uncharacterized protein MJ1115">
    <location>
        <begin position="1"/>
        <end position="261"/>
    </location>
</feature>
<accession>Q58515</accession>
<protein>
    <recommendedName>
        <fullName>Uncharacterized protein MJ1115</fullName>
    </recommendedName>
</protein>
<keyword id="KW-1185">Reference proteome</keyword>
<name>Y1115_METJA</name>
<proteinExistence type="inferred from homology"/>
<gene>
    <name type="ordered locus">MJ1115</name>
</gene>
<reference key="1">
    <citation type="journal article" date="1996" name="Science">
        <title>Complete genome sequence of the methanogenic archaeon, Methanococcus jannaschii.</title>
        <authorList>
            <person name="Bult C.J."/>
            <person name="White O."/>
            <person name="Olsen G.J."/>
            <person name="Zhou L."/>
            <person name="Fleischmann R.D."/>
            <person name="Sutton G.G."/>
            <person name="Blake J.A."/>
            <person name="FitzGerald L.M."/>
            <person name="Clayton R.A."/>
            <person name="Gocayne J.D."/>
            <person name="Kerlavage A.R."/>
            <person name="Dougherty B.A."/>
            <person name="Tomb J.-F."/>
            <person name="Adams M.D."/>
            <person name="Reich C.I."/>
            <person name="Overbeek R."/>
            <person name="Kirkness E.F."/>
            <person name="Weinstock K.G."/>
            <person name="Merrick J.M."/>
            <person name="Glodek A."/>
            <person name="Scott J.L."/>
            <person name="Geoghagen N.S.M."/>
            <person name="Weidman J.F."/>
            <person name="Fuhrmann J.L."/>
            <person name="Nguyen D."/>
            <person name="Utterback T.R."/>
            <person name="Kelley J.M."/>
            <person name="Peterson J.D."/>
            <person name="Sadow P.W."/>
            <person name="Hanna M.C."/>
            <person name="Cotton M.D."/>
            <person name="Roberts K.M."/>
            <person name="Hurst M.A."/>
            <person name="Kaine B.P."/>
            <person name="Borodovsky M."/>
            <person name="Klenk H.-P."/>
            <person name="Fraser C.M."/>
            <person name="Smith H.O."/>
            <person name="Woese C.R."/>
            <person name="Venter J.C."/>
        </authorList>
    </citation>
    <scope>NUCLEOTIDE SEQUENCE [LARGE SCALE GENOMIC DNA]</scope>
    <source>
        <strain>ATCC 43067 / DSM 2661 / JAL-1 / JCM 10045 / NBRC 100440</strain>
    </source>
</reference>
<dbReference type="EMBL" id="L77117">
    <property type="protein sequence ID" value="AAB99116.1"/>
    <property type="molecule type" value="Genomic_DNA"/>
</dbReference>
<dbReference type="PIR" id="B64439">
    <property type="entry name" value="B64439"/>
</dbReference>
<dbReference type="SMR" id="Q58515"/>
<dbReference type="STRING" id="243232.MJ_1115"/>
<dbReference type="PaxDb" id="243232-MJ_1115"/>
<dbReference type="DNASU" id="1452011"/>
<dbReference type="EnsemblBacteria" id="AAB99116">
    <property type="protein sequence ID" value="AAB99116"/>
    <property type="gene ID" value="MJ_1115"/>
</dbReference>
<dbReference type="KEGG" id="mja:MJ_1115"/>
<dbReference type="eggNOG" id="arCOG01982">
    <property type="taxonomic scope" value="Archaea"/>
</dbReference>
<dbReference type="HOGENOM" id="CLU_075239_1_0_2"/>
<dbReference type="InParanoid" id="Q58515"/>
<dbReference type="PhylomeDB" id="Q58515"/>
<dbReference type="Proteomes" id="UP000000805">
    <property type="component" value="Chromosome"/>
</dbReference>
<dbReference type="CDD" id="cd04722">
    <property type="entry name" value="TIM_phosphate_binding"/>
    <property type="match status" value="1"/>
</dbReference>
<dbReference type="InterPro" id="IPR005137">
    <property type="entry name" value="BtpA"/>
</dbReference>
<dbReference type="InterPro" id="IPR011060">
    <property type="entry name" value="RibuloseP-bd_barrel"/>
</dbReference>
<dbReference type="NCBIfam" id="TIGR00259">
    <property type="entry name" value="thylakoid_BtpA"/>
    <property type="match status" value="1"/>
</dbReference>
<dbReference type="PANTHER" id="PTHR21381:SF3">
    <property type="entry name" value="SGC REGION PROTEIN SGCQ-RELATED"/>
    <property type="match status" value="1"/>
</dbReference>
<dbReference type="PANTHER" id="PTHR21381">
    <property type="entry name" value="ZGC:162297"/>
    <property type="match status" value="1"/>
</dbReference>
<dbReference type="Pfam" id="PF03437">
    <property type="entry name" value="BtpA"/>
    <property type="match status" value="1"/>
</dbReference>
<dbReference type="PIRSF" id="PIRSF005956">
    <property type="entry name" value="BtpA"/>
    <property type="match status" value="1"/>
</dbReference>
<dbReference type="SUPFAM" id="SSF51366">
    <property type="entry name" value="Ribulose-phoshate binding barrel"/>
    <property type="match status" value="1"/>
</dbReference>
<organism>
    <name type="scientific">Methanocaldococcus jannaschii (strain ATCC 43067 / DSM 2661 / JAL-1 / JCM 10045 / NBRC 100440)</name>
    <name type="common">Methanococcus jannaschii</name>
    <dbReference type="NCBI Taxonomy" id="243232"/>
    <lineage>
        <taxon>Archaea</taxon>
        <taxon>Methanobacteriati</taxon>
        <taxon>Methanobacteriota</taxon>
        <taxon>Methanomada group</taxon>
        <taxon>Methanococci</taxon>
        <taxon>Methanococcales</taxon>
        <taxon>Methanocaldococcaceae</taxon>
        <taxon>Methanocaldococcus</taxon>
    </lineage>
</organism>
<evidence type="ECO:0000305" key="1"/>
<sequence>MIPMFKKKPLIGMVHLKPLPGSYHYNDNFDDIVDFAIKEAKKLEEAGFDAVMIENFGDAPFKKEADKITIASMAVIAKAIKEEVSLPLGINILRNDAIGAYSIAYVVKADFIRVNVLSGVAFTDQGIIEGKAYELAKLKKLLPSKIKVFADVHVKHAYHFIDFESSLLDTVERGLADAVIISGKRTGKEVDIEKLKLAKELVDVPVIVGSGTNYNNLRILWSYADGFIIGTWIKKDGKANNEIDIDRAKKIVNLANKLKMC</sequence>